<protein>
    <recommendedName>
        <fullName>SNF1-related protein kinase regulatory subunit gamma-1</fullName>
        <shortName>AKIN subunit gamma-1</shortName>
        <shortName>AKING1</shortName>
        <shortName>AKINgamma1</shortName>
    </recommendedName>
    <alternativeName>
        <fullName>CBS domain-containing protein CBSCBS1</fullName>
    </alternativeName>
</protein>
<feature type="initiator methionine" description="Removed" evidence="1">
    <location>
        <position position="1"/>
    </location>
</feature>
<feature type="chain" id="PRO_0000204387" description="SNF1-related protein kinase regulatory subunit gamma-1">
    <location>
        <begin position="2"/>
        <end position="424"/>
    </location>
</feature>
<feature type="domain" description="CBS 1" evidence="2">
    <location>
        <begin position="63"/>
        <end position="131"/>
    </location>
</feature>
<feature type="domain" description="CBS 2" evidence="2">
    <location>
        <begin position="185"/>
        <end position="244"/>
    </location>
</feature>
<feature type="domain" description="CBS 3" evidence="2">
    <location>
        <begin position="263"/>
        <end position="324"/>
    </location>
</feature>
<feature type="domain" description="CBS 4" evidence="2">
    <location>
        <begin position="350"/>
        <end position="408"/>
    </location>
</feature>
<feature type="modified residue" description="N-acetylalanine" evidence="1">
    <location>
        <position position="2"/>
    </location>
</feature>
<feature type="modified residue" description="Phosphoserine" evidence="7 8">
    <location>
        <position position="44"/>
    </location>
</feature>
<feature type="sequence conflict" description="In Ref. 5; AAM64867." evidence="6" ref="5">
    <original>K</original>
    <variation>E</variation>
    <location>
        <position position="175"/>
    </location>
</feature>
<feature type="sequence conflict" description="In Ref. 5; AAM64867." evidence="6" ref="5">
    <original>D</original>
    <variation>E</variation>
    <location>
        <position position="383"/>
    </location>
</feature>
<evidence type="ECO:0000250" key="1">
    <source>
        <dbReference type="UniProtKB" id="Q9CAR3"/>
    </source>
</evidence>
<evidence type="ECO:0000255" key="2">
    <source>
        <dbReference type="PROSITE-ProRule" id="PRU00703"/>
    </source>
</evidence>
<evidence type="ECO:0000269" key="3">
    <source>
    </source>
</evidence>
<evidence type="ECO:0000269" key="4">
    <source>
    </source>
</evidence>
<evidence type="ECO:0000269" key="5">
    <source>
    </source>
</evidence>
<evidence type="ECO:0000305" key="6"/>
<evidence type="ECO:0007744" key="7">
    <source>
    </source>
</evidence>
<evidence type="ECO:0007744" key="8">
    <source>
    </source>
</evidence>
<gene>
    <name type="primary">KING1</name>
    <name type="synonym">CBSCBS1</name>
    <name type="ordered locus">At3g48530</name>
    <name type="ORF">T8P19.40</name>
</gene>
<keyword id="KW-0007">Acetylation</keyword>
<keyword id="KW-0067">ATP-binding</keyword>
<keyword id="KW-0119">Carbohydrate metabolism</keyword>
<keyword id="KW-0129">CBS domain</keyword>
<keyword id="KW-0275">Fatty acid biosynthesis</keyword>
<keyword id="KW-0276">Fatty acid metabolism</keyword>
<keyword id="KW-0444">Lipid biosynthesis</keyword>
<keyword id="KW-0443">Lipid metabolism</keyword>
<keyword id="KW-0496">Mitochondrion</keyword>
<keyword id="KW-0534">Nitrate assimilation</keyword>
<keyword id="KW-0547">Nucleotide-binding</keyword>
<keyword id="KW-0597">Phosphoprotein</keyword>
<keyword id="KW-1185">Reference proteome</keyword>
<keyword id="KW-0677">Repeat</keyword>
<keyword id="KW-0832">Ubl conjugation</keyword>
<reference key="1">
    <citation type="journal article" date="1999" name="Plant J.">
        <title>Arabidopsis thaliana proteins related to the yeast SIP and SNF4 interact with AKINalpha1, an SNF1-like protein kinase.</title>
        <authorList>
            <person name="Bouly J.-P."/>
            <person name="Gissot L."/>
            <person name="Lessard P."/>
            <person name="Kreis M."/>
            <person name="Thomas M."/>
        </authorList>
    </citation>
    <scope>NUCLEOTIDE SEQUENCE [MRNA]</scope>
    <scope>INTERACTION WITH KIN11; KINB1 AND KINB2</scope>
    <scope>INDUCTION</scope>
    <scope>TISSUE SPECIFICITY</scope>
    <scope>COMPONENT OF A HETEROTRIMERIC COMPLEX</scope>
    <scope>SUBUNIT</scope>
    <source>
        <strain>cv. Columbia</strain>
    </source>
</reference>
<reference key="2">
    <citation type="journal article" date="2000" name="Nature">
        <title>Sequence and analysis of chromosome 3 of the plant Arabidopsis thaliana.</title>
        <authorList>
            <person name="Salanoubat M."/>
            <person name="Lemcke K."/>
            <person name="Rieger M."/>
            <person name="Ansorge W."/>
            <person name="Unseld M."/>
            <person name="Fartmann B."/>
            <person name="Valle G."/>
            <person name="Bloecker H."/>
            <person name="Perez-Alonso M."/>
            <person name="Obermaier B."/>
            <person name="Delseny M."/>
            <person name="Boutry M."/>
            <person name="Grivell L.A."/>
            <person name="Mache R."/>
            <person name="Puigdomenech P."/>
            <person name="De Simone V."/>
            <person name="Choisne N."/>
            <person name="Artiguenave F."/>
            <person name="Robert C."/>
            <person name="Brottier P."/>
            <person name="Wincker P."/>
            <person name="Cattolico L."/>
            <person name="Weissenbach J."/>
            <person name="Saurin W."/>
            <person name="Quetier F."/>
            <person name="Schaefer M."/>
            <person name="Mueller-Auer S."/>
            <person name="Gabel C."/>
            <person name="Fuchs M."/>
            <person name="Benes V."/>
            <person name="Wurmbach E."/>
            <person name="Drzonek H."/>
            <person name="Erfle H."/>
            <person name="Jordan N."/>
            <person name="Bangert S."/>
            <person name="Wiedelmann R."/>
            <person name="Kranz H."/>
            <person name="Voss H."/>
            <person name="Holland R."/>
            <person name="Brandt P."/>
            <person name="Nyakatura G."/>
            <person name="Vezzi A."/>
            <person name="D'Angelo M."/>
            <person name="Pallavicini A."/>
            <person name="Toppo S."/>
            <person name="Simionati B."/>
            <person name="Conrad A."/>
            <person name="Hornischer K."/>
            <person name="Kauer G."/>
            <person name="Loehnert T.-H."/>
            <person name="Nordsiek G."/>
            <person name="Reichelt J."/>
            <person name="Scharfe M."/>
            <person name="Schoen O."/>
            <person name="Bargues M."/>
            <person name="Terol J."/>
            <person name="Climent J."/>
            <person name="Navarro P."/>
            <person name="Collado C."/>
            <person name="Perez-Perez A."/>
            <person name="Ottenwaelder B."/>
            <person name="Duchemin D."/>
            <person name="Cooke R."/>
            <person name="Laudie M."/>
            <person name="Berger-Llauro C."/>
            <person name="Purnelle B."/>
            <person name="Masuy D."/>
            <person name="de Haan M."/>
            <person name="Maarse A.C."/>
            <person name="Alcaraz J.-P."/>
            <person name="Cottet A."/>
            <person name="Casacuberta E."/>
            <person name="Monfort A."/>
            <person name="Argiriou A."/>
            <person name="Flores M."/>
            <person name="Liguori R."/>
            <person name="Vitale D."/>
            <person name="Mannhaupt G."/>
            <person name="Haase D."/>
            <person name="Schoof H."/>
            <person name="Rudd S."/>
            <person name="Zaccaria P."/>
            <person name="Mewes H.-W."/>
            <person name="Mayer K.F.X."/>
            <person name="Kaul S."/>
            <person name="Town C.D."/>
            <person name="Koo H.L."/>
            <person name="Tallon L.J."/>
            <person name="Jenkins J."/>
            <person name="Rooney T."/>
            <person name="Rizzo M."/>
            <person name="Walts A."/>
            <person name="Utterback T."/>
            <person name="Fujii C.Y."/>
            <person name="Shea T.P."/>
            <person name="Creasy T.H."/>
            <person name="Haas B."/>
            <person name="Maiti R."/>
            <person name="Wu D."/>
            <person name="Peterson J."/>
            <person name="Van Aken S."/>
            <person name="Pai G."/>
            <person name="Militscher J."/>
            <person name="Sellers P."/>
            <person name="Gill J.E."/>
            <person name="Feldblyum T.V."/>
            <person name="Preuss D."/>
            <person name="Lin X."/>
            <person name="Nierman W.C."/>
            <person name="Salzberg S.L."/>
            <person name="White O."/>
            <person name="Venter J.C."/>
            <person name="Fraser C.M."/>
            <person name="Kaneko T."/>
            <person name="Nakamura Y."/>
            <person name="Sato S."/>
            <person name="Kato T."/>
            <person name="Asamizu E."/>
            <person name="Sasamoto S."/>
            <person name="Kimura T."/>
            <person name="Idesawa K."/>
            <person name="Kawashima K."/>
            <person name="Kishida Y."/>
            <person name="Kiyokawa C."/>
            <person name="Kohara M."/>
            <person name="Matsumoto M."/>
            <person name="Matsuno A."/>
            <person name="Muraki A."/>
            <person name="Nakayama S."/>
            <person name="Nakazaki N."/>
            <person name="Shinpo S."/>
            <person name="Takeuchi C."/>
            <person name="Wada T."/>
            <person name="Watanabe A."/>
            <person name="Yamada M."/>
            <person name="Yasuda M."/>
            <person name="Tabata S."/>
        </authorList>
    </citation>
    <scope>NUCLEOTIDE SEQUENCE [LARGE SCALE GENOMIC DNA]</scope>
    <source>
        <strain>cv. Columbia</strain>
    </source>
</reference>
<reference key="3">
    <citation type="journal article" date="2017" name="Plant J.">
        <title>Araport11: a complete reannotation of the Arabidopsis thaliana reference genome.</title>
        <authorList>
            <person name="Cheng C.Y."/>
            <person name="Krishnakumar V."/>
            <person name="Chan A.P."/>
            <person name="Thibaud-Nissen F."/>
            <person name="Schobel S."/>
            <person name="Town C.D."/>
        </authorList>
    </citation>
    <scope>GENOME REANNOTATION</scope>
    <source>
        <strain>cv. Columbia</strain>
    </source>
</reference>
<reference key="4">
    <citation type="journal article" date="2003" name="Science">
        <title>Empirical analysis of transcriptional activity in the Arabidopsis genome.</title>
        <authorList>
            <person name="Yamada K."/>
            <person name="Lim J."/>
            <person name="Dale J.M."/>
            <person name="Chen H."/>
            <person name="Shinn P."/>
            <person name="Palm C.J."/>
            <person name="Southwick A.M."/>
            <person name="Wu H.C."/>
            <person name="Kim C.J."/>
            <person name="Nguyen M."/>
            <person name="Pham P.K."/>
            <person name="Cheuk R.F."/>
            <person name="Karlin-Newmann G."/>
            <person name="Liu S.X."/>
            <person name="Lam B."/>
            <person name="Sakano H."/>
            <person name="Wu T."/>
            <person name="Yu G."/>
            <person name="Miranda M."/>
            <person name="Quach H.L."/>
            <person name="Tripp M."/>
            <person name="Chang C.H."/>
            <person name="Lee J.M."/>
            <person name="Toriumi M.J."/>
            <person name="Chan M.M."/>
            <person name="Tang C.C."/>
            <person name="Onodera C.S."/>
            <person name="Deng J.M."/>
            <person name="Akiyama K."/>
            <person name="Ansari Y."/>
            <person name="Arakawa T."/>
            <person name="Banh J."/>
            <person name="Banno F."/>
            <person name="Bowser L."/>
            <person name="Brooks S.Y."/>
            <person name="Carninci P."/>
            <person name="Chao Q."/>
            <person name="Choy N."/>
            <person name="Enju A."/>
            <person name="Goldsmith A.D."/>
            <person name="Gurjal M."/>
            <person name="Hansen N.F."/>
            <person name="Hayashizaki Y."/>
            <person name="Johnson-Hopson C."/>
            <person name="Hsuan V.W."/>
            <person name="Iida K."/>
            <person name="Karnes M."/>
            <person name="Khan S."/>
            <person name="Koesema E."/>
            <person name="Ishida J."/>
            <person name="Jiang P.X."/>
            <person name="Jones T."/>
            <person name="Kawai J."/>
            <person name="Kamiya A."/>
            <person name="Meyers C."/>
            <person name="Nakajima M."/>
            <person name="Narusaka M."/>
            <person name="Seki M."/>
            <person name="Sakurai T."/>
            <person name="Satou M."/>
            <person name="Tamse R."/>
            <person name="Vaysberg M."/>
            <person name="Wallender E.K."/>
            <person name="Wong C."/>
            <person name="Yamamura Y."/>
            <person name="Yuan S."/>
            <person name="Shinozaki K."/>
            <person name="Davis R.W."/>
            <person name="Theologis A."/>
            <person name="Ecker J.R."/>
        </authorList>
    </citation>
    <scope>NUCLEOTIDE SEQUENCE [LARGE SCALE MRNA]</scope>
    <source>
        <strain>cv. Columbia</strain>
    </source>
</reference>
<reference key="5">
    <citation type="submission" date="2002-03" db="EMBL/GenBank/DDBJ databases">
        <title>Full-length cDNA from Arabidopsis thaliana.</title>
        <authorList>
            <person name="Brover V.V."/>
            <person name="Troukhan M.E."/>
            <person name="Alexandrov N.A."/>
            <person name="Lu Y.-P."/>
            <person name="Flavell R.B."/>
            <person name="Feldmann K.A."/>
        </authorList>
    </citation>
    <scope>NUCLEOTIDE SEQUENCE [LARGE SCALE MRNA]</scope>
</reference>
<reference key="6">
    <citation type="journal article" date="2007" name="Trends Plant Sci.">
        <title>SNF1/AMPK/SnRK1 kinases, global regulators at the heart of energy control?</title>
        <authorList>
            <person name="Polge C."/>
            <person name="Thomas M."/>
        </authorList>
    </citation>
    <scope>REVIEW</scope>
</reference>
<reference key="7">
    <citation type="journal article" date="2009" name="BMC Genomics">
        <title>Genome wide expression analysis of CBS domain containing proteins in Arabidopsis thaliana (L.) Heynh and Oryza sativa L. reveals their developmental and stress regulation.</title>
        <authorList>
            <person name="Kushwaha H.R."/>
            <person name="Singh A.K."/>
            <person name="Sopory S.K."/>
            <person name="Singla-Pareek S.L."/>
            <person name="Pareek A."/>
        </authorList>
    </citation>
    <scope>GENE FAMILY</scope>
    <scope>NOMENCLATURE</scope>
</reference>
<reference key="8">
    <citation type="journal article" date="2009" name="J. Proteomics">
        <title>Phosphoproteomic analysis of nuclei-enriched fractions from Arabidopsis thaliana.</title>
        <authorList>
            <person name="Jones A.M.E."/>
            <person name="MacLean D."/>
            <person name="Studholme D.J."/>
            <person name="Serna-Sanz A."/>
            <person name="Andreasson E."/>
            <person name="Rathjen J.P."/>
            <person name="Peck S.C."/>
        </authorList>
    </citation>
    <scope>PHOSPHORYLATION [LARGE SCALE ANALYSIS] AT SER-44</scope>
    <scope>IDENTIFICATION BY MASS SPECTROMETRY [LARGE SCALE ANALYSIS]</scope>
    <source>
        <strain>cv. Columbia</strain>
    </source>
</reference>
<reference key="9">
    <citation type="journal article" date="2009" name="Plant Physiol.">
        <title>Large-scale Arabidopsis phosphoproteome profiling reveals novel chloroplast kinase substrates and phosphorylation networks.</title>
        <authorList>
            <person name="Reiland S."/>
            <person name="Messerli G."/>
            <person name="Baerenfaller K."/>
            <person name="Gerrits B."/>
            <person name="Endler A."/>
            <person name="Grossmann J."/>
            <person name="Gruissem W."/>
            <person name="Baginsky S."/>
        </authorList>
    </citation>
    <scope>PHOSPHORYLATION [LARGE SCALE ANALYSIS] AT SER-44</scope>
    <scope>IDENTIFICATION BY MASS SPECTROMETRY [LARGE SCALE ANALYSIS]</scope>
</reference>
<reference key="10">
    <citation type="journal article" date="2016" name="Plant J.">
        <title>SUMOylation represses SnRK1 signaling in Arabidopsis.</title>
        <authorList>
            <person name="Crozet P."/>
            <person name="Margalha L."/>
            <person name="Butowt R."/>
            <person name="Fernandes N."/>
            <person name="Elias C.A."/>
            <person name="Orosa B."/>
            <person name="Tomanov K."/>
            <person name="Teige M."/>
            <person name="Bachmair A."/>
            <person name="Sadanandom A."/>
            <person name="Baena-Gonzalez E."/>
        </authorList>
    </citation>
    <scope>SUMOYLATION</scope>
</reference>
<reference key="11">
    <citation type="journal article" date="2019" name="Plant Mol. Biol.">
        <title>The role of HEXOKINASE1 in Arabidopsis leaf growth.</title>
        <authorList>
            <person name="Van Dingenen J."/>
            <person name="Vermeersch M."/>
            <person name="De Milde L."/>
            <person name="Hulsmans S."/>
            <person name="De Winne N."/>
            <person name="Van Leene J."/>
            <person name="Gonzalez N."/>
            <person name="Dhondt S."/>
            <person name="De Jaeger G."/>
            <person name="Rolland F."/>
            <person name="Inze D."/>
        </authorList>
    </citation>
    <scope>INTERACTION WITH HXK1</scope>
    <scope>SUBCELLULAR LOCATION</scope>
</reference>
<dbReference type="EMBL" id="AJ132317">
    <property type="protein sequence ID" value="CAB64720.1"/>
    <property type="molecule type" value="mRNA"/>
</dbReference>
<dbReference type="EMBL" id="AL133315">
    <property type="protein sequence ID" value="CAB62342.1"/>
    <property type="molecule type" value="Genomic_DNA"/>
</dbReference>
<dbReference type="EMBL" id="CP002686">
    <property type="protein sequence ID" value="AEE78427.1"/>
    <property type="molecule type" value="Genomic_DNA"/>
</dbReference>
<dbReference type="EMBL" id="AY042839">
    <property type="protein sequence ID" value="AAK68779.1"/>
    <property type="molecule type" value="mRNA"/>
</dbReference>
<dbReference type="EMBL" id="AY081464">
    <property type="protein sequence ID" value="AAM10026.1"/>
    <property type="molecule type" value="mRNA"/>
</dbReference>
<dbReference type="EMBL" id="AY087317">
    <property type="protein sequence ID" value="AAM64867.1"/>
    <property type="molecule type" value="mRNA"/>
</dbReference>
<dbReference type="PIR" id="T46197">
    <property type="entry name" value="T46197"/>
</dbReference>
<dbReference type="RefSeq" id="NP_190422.1">
    <property type="nucleotide sequence ID" value="NM_114711.2"/>
</dbReference>
<dbReference type="SMR" id="Q8LBB2"/>
<dbReference type="BioGRID" id="9331">
    <property type="interactions" value="3"/>
</dbReference>
<dbReference type="FunCoup" id="Q8LBB2">
    <property type="interactions" value="149"/>
</dbReference>
<dbReference type="IntAct" id="Q8LBB2">
    <property type="interactions" value="12"/>
</dbReference>
<dbReference type="STRING" id="3702.Q8LBB2"/>
<dbReference type="iPTMnet" id="Q8LBB2"/>
<dbReference type="PaxDb" id="3702-AT3G48530.1"/>
<dbReference type="ProteomicsDB" id="250693"/>
<dbReference type="EnsemblPlants" id="AT3G48530.1">
    <property type="protein sequence ID" value="AT3G48530.1"/>
    <property type="gene ID" value="AT3G48530"/>
</dbReference>
<dbReference type="GeneID" id="824012"/>
<dbReference type="Gramene" id="AT3G48530.1">
    <property type="protein sequence ID" value="AT3G48530.1"/>
    <property type="gene ID" value="AT3G48530"/>
</dbReference>
<dbReference type="KEGG" id="ath:AT3G48530"/>
<dbReference type="Araport" id="AT3G48530"/>
<dbReference type="TAIR" id="AT3G48530">
    <property type="gene designation" value="KING1"/>
</dbReference>
<dbReference type="eggNOG" id="KOG1764">
    <property type="taxonomic scope" value="Eukaryota"/>
</dbReference>
<dbReference type="HOGENOM" id="CLU_036145_0_0_1"/>
<dbReference type="InParanoid" id="Q8LBB2"/>
<dbReference type="OMA" id="VRQQDYK"/>
<dbReference type="OrthoDB" id="449052at2759"/>
<dbReference type="PhylomeDB" id="Q8LBB2"/>
<dbReference type="PRO" id="PR:Q8LBB2"/>
<dbReference type="Proteomes" id="UP000006548">
    <property type="component" value="Chromosome 3"/>
</dbReference>
<dbReference type="ExpressionAtlas" id="Q8LBB2">
    <property type="expression patterns" value="baseline and differential"/>
</dbReference>
<dbReference type="GO" id="GO:0005739">
    <property type="term" value="C:mitochondrion"/>
    <property type="evidence" value="ECO:0007669"/>
    <property type="project" value="UniProtKB-SubCell"/>
</dbReference>
<dbReference type="GO" id="GO:0005524">
    <property type="term" value="F:ATP binding"/>
    <property type="evidence" value="ECO:0007669"/>
    <property type="project" value="UniProtKB-KW"/>
</dbReference>
<dbReference type="GO" id="GO:0019887">
    <property type="term" value="F:protein kinase regulator activity"/>
    <property type="evidence" value="ECO:0000353"/>
    <property type="project" value="TAIR"/>
</dbReference>
<dbReference type="GO" id="GO:0006633">
    <property type="term" value="P:fatty acid biosynthetic process"/>
    <property type="evidence" value="ECO:0007669"/>
    <property type="project" value="UniProtKB-KW"/>
</dbReference>
<dbReference type="GO" id="GO:0042128">
    <property type="term" value="P:nitrate assimilation"/>
    <property type="evidence" value="ECO:0007669"/>
    <property type="project" value="UniProtKB-KW"/>
</dbReference>
<dbReference type="CDD" id="cd02205">
    <property type="entry name" value="CBS_pair_SF"/>
    <property type="match status" value="1"/>
</dbReference>
<dbReference type="Gene3D" id="3.10.580.10">
    <property type="entry name" value="CBS-domain"/>
    <property type="match status" value="2"/>
</dbReference>
<dbReference type="InterPro" id="IPR050511">
    <property type="entry name" value="AMPK_gamma/SDS23_families"/>
</dbReference>
<dbReference type="InterPro" id="IPR000644">
    <property type="entry name" value="CBS_dom"/>
</dbReference>
<dbReference type="InterPro" id="IPR046342">
    <property type="entry name" value="CBS_dom_sf"/>
</dbReference>
<dbReference type="PANTHER" id="PTHR13780">
    <property type="entry name" value="AMP-ACTIVATED PROTEIN KINASE, GAMMA REGULATORY SUBUNIT"/>
    <property type="match status" value="1"/>
</dbReference>
<dbReference type="PANTHER" id="PTHR13780:SF36">
    <property type="entry name" value="CBS DOMAIN-CONTAINING PROTEIN"/>
    <property type="match status" value="1"/>
</dbReference>
<dbReference type="Pfam" id="PF00571">
    <property type="entry name" value="CBS"/>
    <property type="match status" value="2"/>
</dbReference>
<dbReference type="SMART" id="SM00116">
    <property type="entry name" value="CBS"/>
    <property type="match status" value="4"/>
</dbReference>
<dbReference type="SUPFAM" id="SSF54631">
    <property type="entry name" value="CBS-domain pair"/>
    <property type="match status" value="2"/>
</dbReference>
<dbReference type="PROSITE" id="PS51371">
    <property type="entry name" value="CBS"/>
    <property type="match status" value="4"/>
</dbReference>
<organism>
    <name type="scientific">Arabidopsis thaliana</name>
    <name type="common">Mouse-ear cress</name>
    <dbReference type="NCBI Taxonomy" id="3702"/>
    <lineage>
        <taxon>Eukaryota</taxon>
        <taxon>Viridiplantae</taxon>
        <taxon>Streptophyta</taxon>
        <taxon>Embryophyta</taxon>
        <taxon>Tracheophyta</taxon>
        <taxon>Spermatophyta</taxon>
        <taxon>Magnoliopsida</taxon>
        <taxon>eudicotyledons</taxon>
        <taxon>Gunneridae</taxon>
        <taxon>Pentapetalae</taxon>
        <taxon>rosids</taxon>
        <taxon>malvids</taxon>
        <taxon>Brassicales</taxon>
        <taxon>Brassicaceae</taxon>
        <taxon>Camelineae</taxon>
        <taxon>Arabidopsis</taxon>
    </lineage>
</organism>
<accession>Q8LBB2</accession>
<accession>Q9S7W6</accession>
<comment type="function">
    <text>Regulatory subunit of the probable trimeric SNF1-related protein kinase (SnRK) complex, which may play a role in a signal transduction cascade regulating gene expression and carbohydrate metabolism in higher plants. The SnRK complex may also be involved in the regulation of fatty acid synthesis by phosphorylation of acetyl-CoA carboxylase and in assimilation of nitrogen by phosphorylating nitrate reductase.</text>
</comment>
<comment type="subunit">
    <text evidence="3 5">Subunit of a probable heterotrimeric complex consisting of an alpha catalytic (KIN10 or KIN11) subunit, and a beta (KINB) and a gamma (KING or SNF4) non-catalytic regulatory subunits. Interacts with HXK1 in mitochondrion (PubMed:30511331).</text>
</comment>
<comment type="subcellular location">
    <subcellularLocation>
        <location evidence="5">Mitochondrion</location>
    </subcellularLocation>
</comment>
<comment type="tissue specificity">
    <text evidence="3">Expressed in vegetative organs and, to lower extent, in reproductive organs.</text>
</comment>
<comment type="induction">
    <text evidence="3">Strongly induced in the dark.</text>
</comment>
<comment type="PTM">
    <text evidence="4">Sumoylated by SIZ1.</text>
</comment>
<comment type="similarity">
    <text evidence="6">Belongs to the 5'-AMP-activated protein kinase gamma subunit family.</text>
</comment>
<sequence>MATVPEIKIMRSESLGHRSDVSSPEAKLGMRVEDLWDEQKPQLSPNEKLNACFESIPVSAFPLSSDSQDIEIRSDTSLAEAVQTLSKFKVLSAPVVDVDAPEDASWIDRYIGIVEFPGIVVWLLHQLEPPSPRSPAVAASNGFSHDFTTDVLDNGDSAVTSGNFFEVLTSSELYKNTKVRDISGTFRWAPFLALQKENSFLTMLLLLSKYKMKSIPVVDLGVAKIENIITQSGVIHMLAECAGLLWFEDWGIKTLSEVGLPIMSKDHIIKIYEDEPVLQAFKLMRRKRIGGIPVIERNSEKPVGNISLRDVQFLLTAPEIYHDYRSITTKNFLVSVREHLEKCGDTSAPIMSGVIACTKNHTLKELILMLDAEKIHRIYVVDDFGNLEGLITLRDIIARLVHEPSGYFGDFFDGVMPLPENYRV</sequence>
<name>KING1_ARATH</name>
<proteinExistence type="evidence at protein level"/>